<reference key="1">
    <citation type="journal article" date="1988" name="J. Mol. Evol.">
        <title>Nucleotide sequence of regions homologous to nifH (nitrogenase Fe protein) from the nitrogen-fixing archaebacteria Methanococcus thermolithotrophicus and Methanobacterium ivanovii: evolutionary implications.</title>
        <authorList>
            <person name="Souillard N."/>
            <person name="Magot M."/>
            <person name="Possot O."/>
            <person name="Sibold L."/>
        </authorList>
    </citation>
    <scope>NUCLEOTIDE SEQUENCE [GENOMIC DNA]</scope>
</reference>
<organism>
    <name type="scientific">Methanothermococcus thermolithotrophicus</name>
    <name type="common">Methanococcus thermolithotrophicus</name>
    <dbReference type="NCBI Taxonomy" id="2186"/>
    <lineage>
        <taxon>Archaea</taxon>
        <taxon>Methanobacteriati</taxon>
        <taxon>Methanobacteriota</taxon>
        <taxon>Methanomada group</taxon>
        <taxon>Methanococci</taxon>
        <taxon>Methanococcales</taxon>
        <taxon>Methanococcaceae</taxon>
        <taxon>Methanothermococcus</taxon>
    </lineage>
</organism>
<sequence>MKIVVVGGGTSGLLSALALEKEGHDVLVLEKDKVGGLCRSENIDGYTVDIGVHAITMLNDGPLTRLLNNYARYIPNFREYGDYYVRTDKLQKIPVSMNEWMT</sequence>
<proteinExistence type="predicted"/>
<accession>P05410</accession>
<name>YNI2_METTL</name>
<dbReference type="EMBL" id="X07500">
    <property type="protein sequence ID" value="CAA30382.1"/>
    <property type="molecule type" value="Genomic_DNA"/>
</dbReference>
<dbReference type="PIR" id="S00739">
    <property type="entry name" value="S00739"/>
</dbReference>
<dbReference type="SMR" id="P05410"/>
<dbReference type="Gene3D" id="3.50.50.60">
    <property type="entry name" value="FAD/NAD(P)-binding domain"/>
    <property type="match status" value="1"/>
</dbReference>
<dbReference type="InterPro" id="IPR036188">
    <property type="entry name" value="FAD/NAD-bd_sf"/>
</dbReference>
<dbReference type="PANTHER" id="PTHR43734">
    <property type="entry name" value="PHYTOENE DESATURASE"/>
    <property type="match status" value="1"/>
</dbReference>
<dbReference type="PANTHER" id="PTHR43734:SF1">
    <property type="entry name" value="PHYTOENE DESATURASE"/>
    <property type="match status" value="1"/>
</dbReference>
<dbReference type="Pfam" id="PF13450">
    <property type="entry name" value="NAD_binding_8"/>
    <property type="match status" value="1"/>
</dbReference>
<dbReference type="SUPFAM" id="SSF51905">
    <property type="entry name" value="FAD/NAD(P)-binding domain"/>
    <property type="match status" value="1"/>
</dbReference>
<protein>
    <recommendedName>
        <fullName>Uncharacterized protein in nifH2 3'region</fullName>
    </recommendedName>
</protein>
<feature type="chain" id="PRO_0000066329" description="Uncharacterized protein in nifH2 3'region">
    <location>
        <begin position="1"/>
        <end position="102" status="greater than"/>
    </location>
</feature>
<feature type="non-terminal residue">
    <location>
        <position position="102"/>
    </location>
</feature>